<dbReference type="EC" id="5.3.1.16" evidence="1"/>
<dbReference type="EMBL" id="CP000822">
    <property type="protein sequence ID" value="ABV11913.1"/>
    <property type="molecule type" value="Genomic_DNA"/>
</dbReference>
<dbReference type="RefSeq" id="WP_012131736.1">
    <property type="nucleotide sequence ID" value="NC_009792.1"/>
</dbReference>
<dbReference type="SMR" id="A8AEK0"/>
<dbReference type="STRING" id="290338.CKO_00761"/>
<dbReference type="GeneID" id="45134963"/>
<dbReference type="KEGG" id="cko:CKO_00761"/>
<dbReference type="HOGENOM" id="CLU_048577_1_2_6"/>
<dbReference type="OrthoDB" id="9807749at2"/>
<dbReference type="UniPathway" id="UPA00031">
    <property type="reaction ID" value="UER00009"/>
</dbReference>
<dbReference type="Proteomes" id="UP000008148">
    <property type="component" value="Chromosome"/>
</dbReference>
<dbReference type="GO" id="GO:0005737">
    <property type="term" value="C:cytoplasm"/>
    <property type="evidence" value="ECO:0007669"/>
    <property type="project" value="UniProtKB-SubCell"/>
</dbReference>
<dbReference type="GO" id="GO:0003949">
    <property type="term" value="F:1-(5-phosphoribosyl)-5-[(5-phosphoribosylamino)methylideneamino]imidazole-4-carboxamide isomerase activity"/>
    <property type="evidence" value="ECO:0007669"/>
    <property type="project" value="UniProtKB-UniRule"/>
</dbReference>
<dbReference type="GO" id="GO:0000105">
    <property type="term" value="P:L-histidine biosynthetic process"/>
    <property type="evidence" value="ECO:0007669"/>
    <property type="project" value="UniProtKB-UniRule"/>
</dbReference>
<dbReference type="GO" id="GO:0000162">
    <property type="term" value="P:L-tryptophan biosynthetic process"/>
    <property type="evidence" value="ECO:0007669"/>
    <property type="project" value="TreeGrafter"/>
</dbReference>
<dbReference type="CDD" id="cd04732">
    <property type="entry name" value="HisA"/>
    <property type="match status" value="1"/>
</dbReference>
<dbReference type="FunFam" id="3.20.20.70:FF:000009">
    <property type="entry name" value="1-(5-phosphoribosyl)-5-[(5-phosphoribosylamino)methylideneamino] imidazole-4-carboxamide isomerase"/>
    <property type="match status" value="1"/>
</dbReference>
<dbReference type="Gene3D" id="3.20.20.70">
    <property type="entry name" value="Aldolase class I"/>
    <property type="match status" value="1"/>
</dbReference>
<dbReference type="HAMAP" id="MF_01014">
    <property type="entry name" value="HisA"/>
    <property type="match status" value="1"/>
</dbReference>
<dbReference type="InterPro" id="IPR013785">
    <property type="entry name" value="Aldolase_TIM"/>
</dbReference>
<dbReference type="InterPro" id="IPR006062">
    <property type="entry name" value="His_biosynth"/>
</dbReference>
<dbReference type="InterPro" id="IPR006063">
    <property type="entry name" value="HisA_bact_arch"/>
</dbReference>
<dbReference type="InterPro" id="IPR044524">
    <property type="entry name" value="Isoase_HisA-like"/>
</dbReference>
<dbReference type="InterPro" id="IPR023016">
    <property type="entry name" value="Isoase_HisA-like_bact"/>
</dbReference>
<dbReference type="InterPro" id="IPR011060">
    <property type="entry name" value="RibuloseP-bd_barrel"/>
</dbReference>
<dbReference type="NCBIfam" id="TIGR00007">
    <property type="entry name" value="1-(5-phosphoribosyl)-5-[(5-phosphoribosylamino)methylideneamino]imidazole-4-carboxamide isomerase"/>
    <property type="match status" value="1"/>
</dbReference>
<dbReference type="PANTHER" id="PTHR43090">
    <property type="entry name" value="1-(5-PHOSPHORIBOSYL)-5-[(5-PHOSPHORIBOSYLAMINO)METHYLIDENEAMINO] IMIDAZOLE-4-CARBOXAMIDE ISOMERASE"/>
    <property type="match status" value="1"/>
</dbReference>
<dbReference type="PANTHER" id="PTHR43090:SF2">
    <property type="entry name" value="1-(5-PHOSPHORIBOSYL)-5-[(5-PHOSPHORIBOSYLAMINO)METHYLIDENEAMINO] IMIDAZOLE-4-CARBOXAMIDE ISOMERASE"/>
    <property type="match status" value="1"/>
</dbReference>
<dbReference type="Pfam" id="PF00977">
    <property type="entry name" value="His_biosynth"/>
    <property type="match status" value="1"/>
</dbReference>
<dbReference type="SUPFAM" id="SSF51366">
    <property type="entry name" value="Ribulose-phoshate binding barrel"/>
    <property type="match status" value="1"/>
</dbReference>
<sequence>MIIPALDLIDGTVVRLHQGDYARQRDYGNDPLPRLRDYAAQGAEVLHLVDLTGAKDPARRQIPLIKTLVAGVNVPVQVGGGVRTEDDVAALLDAGVARVVVGSTAVKSPEVVKGWFERFGADALVLALDVRIDDRGNKQVAVSGWQENSGVSLEELVETYLPVGLKHVLCTDISRDGTLAGSNVSLYDEVCAKYPQVAFQSSGGIGGIEDVAALRGTGVRGVIVGRALLEGKFTVKEAIQCWQNV</sequence>
<keyword id="KW-0028">Amino-acid biosynthesis</keyword>
<keyword id="KW-0963">Cytoplasm</keyword>
<keyword id="KW-0368">Histidine biosynthesis</keyword>
<keyword id="KW-0413">Isomerase</keyword>
<keyword id="KW-1185">Reference proteome</keyword>
<comment type="catalytic activity">
    <reaction evidence="1">
        <text>1-(5-phospho-beta-D-ribosyl)-5-[(5-phospho-beta-D-ribosylamino)methylideneamino]imidazole-4-carboxamide = 5-[(5-phospho-1-deoxy-D-ribulos-1-ylimino)methylamino]-1-(5-phospho-beta-D-ribosyl)imidazole-4-carboxamide</text>
        <dbReference type="Rhea" id="RHEA:15469"/>
        <dbReference type="ChEBI" id="CHEBI:58435"/>
        <dbReference type="ChEBI" id="CHEBI:58525"/>
        <dbReference type="EC" id="5.3.1.16"/>
    </reaction>
</comment>
<comment type="pathway">
    <text evidence="1">Amino-acid biosynthesis; L-histidine biosynthesis; L-histidine from 5-phospho-alpha-D-ribose 1-diphosphate: step 4/9.</text>
</comment>
<comment type="subcellular location">
    <subcellularLocation>
        <location evidence="1">Cytoplasm</location>
    </subcellularLocation>
</comment>
<comment type="similarity">
    <text evidence="1">Belongs to the HisA/HisF family.</text>
</comment>
<organism>
    <name type="scientific">Citrobacter koseri (strain ATCC BAA-895 / CDC 4225-83 / SGSC4696)</name>
    <dbReference type="NCBI Taxonomy" id="290338"/>
    <lineage>
        <taxon>Bacteria</taxon>
        <taxon>Pseudomonadati</taxon>
        <taxon>Pseudomonadota</taxon>
        <taxon>Gammaproteobacteria</taxon>
        <taxon>Enterobacterales</taxon>
        <taxon>Enterobacteriaceae</taxon>
        <taxon>Citrobacter</taxon>
    </lineage>
</organism>
<evidence type="ECO:0000255" key="1">
    <source>
        <dbReference type="HAMAP-Rule" id="MF_01014"/>
    </source>
</evidence>
<accession>A8AEK0</accession>
<proteinExistence type="inferred from homology"/>
<name>HIS4_CITK8</name>
<gene>
    <name evidence="1" type="primary">hisA</name>
    <name type="ordered locus">CKO_00761</name>
</gene>
<reference key="1">
    <citation type="submission" date="2007-08" db="EMBL/GenBank/DDBJ databases">
        <authorList>
            <consortium name="The Citrobacter koseri Genome Sequencing Project"/>
            <person name="McClelland M."/>
            <person name="Sanderson E.K."/>
            <person name="Porwollik S."/>
            <person name="Spieth J."/>
            <person name="Clifton W.S."/>
            <person name="Latreille P."/>
            <person name="Courtney L."/>
            <person name="Wang C."/>
            <person name="Pepin K."/>
            <person name="Bhonagiri V."/>
            <person name="Nash W."/>
            <person name="Johnson M."/>
            <person name="Thiruvilangam P."/>
            <person name="Wilson R."/>
        </authorList>
    </citation>
    <scope>NUCLEOTIDE SEQUENCE [LARGE SCALE GENOMIC DNA]</scope>
    <source>
        <strain>ATCC BAA-895 / CDC 4225-83 / SGSC4696</strain>
    </source>
</reference>
<protein>
    <recommendedName>
        <fullName evidence="1">1-(5-phosphoribosyl)-5-[(5-phosphoribosylamino)methylideneamino] imidazole-4-carboxamide isomerase</fullName>
        <ecNumber evidence="1">5.3.1.16</ecNumber>
    </recommendedName>
    <alternativeName>
        <fullName evidence="1">Phosphoribosylformimino-5-aminoimidazole carboxamide ribotide isomerase</fullName>
    </alternativeName>
</protein>
<feature type="chain" id="PRO_1000063200" description="1-(5-phosphoribosyl)-5-[(5-phosphoribosylamino)methylideneamino] imidazole-4-carboxamide isomerase">
    <location>
        <begin position="1"/>
        <end position="245"/>
    </location>
</feature>
<feature type="active site" description="Proton acceptor" evidence="1">
    <location>
        <position position="7"/>
    </location>
</feature>
<feature type="active site" description="Proton donor" evidence="1">
    <location>
        <position position="129"/>
    </location>
</feature>